<keyword id="KW-0963">Cytoplasm</keyword>
<keyword id="KW-1185">Reference proteome</keyword>
<keyword id="KW-0704">Schiff base</keyword>
<keyword id="KW-0784">Thiamine biosynthesis</keyword>
<keyword id="KW-0808">Transferase</keyword>
<reference key="1">
    <citation type="journal article" date="2009" name="J. Bacteriol.">
        <title>Complete genome sequence and comparative genome analysis of enteropathogenic Escherichia coli O127:H6 strain E2348/69.</title>
        <authorList>
            <person name="Iguchi A."/>
            <person name="Thomson N.R."/>
            <person name="Ogura Y."/>
            <person name="Saunders D."/>
            <person name="Ooka T."/>
            <person name="Henderson I.R."/>
            <person name="Harris D."/>
            <person name="Asadulghani M."/>
            <person name="Kurokawa K."/>
            <person name="Dean P."/>
            <person name="Kenny B."/>
            <person name="Quail M.A."/>
            <person name="Thurston S."/>
            <person name="Dougan G."/>
            <person name="Hayashi T."/>
            <person name="Parkhill J."/>
            <person name="Frankel G."/>
        </authorList>
    </citation>
    <scope>NUCLEOTIDE SEQUENCE [LARGE SCALE GENOMIC DNA]</scope>
    <source>
        <strain>E2348/69 / EPEC</strain>
    </source>
</reference>
<organism>
    <name type="scientific">Escherichia coli O127:H6 (strain E2348/69 / EPEC)</name>
    <dbReference type="NCBI Taxonomy" id="574521"/>
    <lineage>
        <taxon>Bacteria</taxon>
        <taxon>Pseudomonadati</taxon>
        <taxon>Pseudomonadota</taxon>
        <taxon>Gammaproteobacteria</taxon>
        <taxon>Enterobacterales</taxon>
        <taxon>Enterobacteriaceae</taxon>
        <taxon>Escherichia</taxon>
    </lineage>
</organism>
<comment type="function">
    <text evidence="1">Catalyzes the rearrangement of 1-deoxy-D-xylulose 5-phosphate (DXP) to produce the thiazole phosphate moiety of thiamine. Sulfur is provided by the thiocarboxylate moiety of the carrier protein ThiS. In vitro, sulfur can be provided by H(2)S.</text>
</comment>
<comment type="catalytic activity">
    <reaction evidence="1">
        <text>[ThiS sulfur-carrier protein]-C-terminal-Gly-aminoethanethioate + 2-iminoacetate + 1-deoxy-D-xylulose 5-phosphate = [ThiS sulfur-carrier protein]-C-terminal Gly-Gly + 2-[(2R,5Z)-2-carboxy-4-methylthiazol-5(2H)-ylidene]ethyl phosphate + 2 H2O + H(+)</text>
        <dbReference type="Rhea" id="RHEA:26297"/>
        <dbReference type="Rhea" id="RHEA-COMP:12909"/>
        <dbReference type="Rhea" id="RHEA-COMP:19908"/>
        <dbReference type="ChEBI" id="CHEBI:15377"/>
        <dbReference type="ChEBI" id="CHEBI:15378"/>
        <dbReference type="ChEBI" id="CHEBI:57792"/>
        <dbReference type="ChEBI" id="CHEBI:62899"/>
        <dbReference type="ChEBI" id="CHEBI:77846"/>
        <dbReference type="ChEBI" id="CHEBI:90778"/>
        <dbReference type="ChEBI" id="CHEBI:232372"/>
        <dbReference type="EC" id="2.8.1.10"/>
    </reaction>
</comment>
<comment type="pathway">
    <text evidence="1">Cofactor biosynthesis; thiamine diphosphate biosynthesis.</text>
</comment>
<comment type="subunit">
    <text evidence="1">Homotetramer. Forms heterodimers with either ThiH or ThiS.</text>
</comment>
<comment type="subcellular location">
    <subcellularLocation>
        <location evidence="1">Cytoplasm</location>
    </subcellularLocation>
</comment>
<comment type="similarity">
    <text evidence="1">Belongs to the ThiG family.</text>
</comment>
<accession>B7UPE5</accession>
<proteinExistence type="inferred from homology"/>
<dbReference type="EC" id="2.8.1.10" evidence="1"/>
<dbReference type="EMBL" id="FM180568">
    <property type="protein sequence ID" value="CAS11845.1"/>
    <property type="molecule type" value="Genomic_DNA"/>
</dbReference>
<dbReference type="RefSeq" id="WP_000902351.1">
    <property type="nucleotide sequence ID" value="NC_011601.1"/>
</dbReference>
<dbReference type="SMR" id="B7UPE5"/>
<dbReference type="KEGG" id="ecg:E2348C_4297"/>
<dbReference type="HOGENOM" id="CLU_062233_1_0_6"/>
<dbReference type="UniPathway" id="UPA00060"/>
<dbReference type="Proteomes" id="UP000008205">
    <property type="component" value="Chromosome"/>
</dbReference>
<dbReference type="GO" id="GO:0005737">
    <property type="term" value="C:cytoplasm"/>
    <property type="evidence" value="ECO:0007669"/>
    <property type="project" value="UniProtKB-SubCell"/>
</dbReference>
<dbReference type="GO" id="GO:1990107">
    <property type="term" value="F:thiazole synthase activity"/>
    <property type="evidence" value="ECO:0007669"/>
    <property type="project" value="UniProtKB-EC"/>
</dbReference>
<dbReference type="GO" id="GO:0009229">
    <property type="term" value="P:thiamine diphosphate biosynthetic process"/>
    <property type="evidence" value="ECO:0007669"/>
    <property type="project" value="UniProtKB-UniRule"/>
</dbReference>
<dbReference type="CDD" id="cd04728">
    <property type="entry name" value="ThiG"/>
    <property type="match status" value="1"/>
</dbReference>
<dbReference type="FunFam" id="3.20.20.70:FF:000049">
    <property type="entry name" value="Thiazole synthase"/>
    <property type="match status" value="1"/>
</dbReference>
<dbReference type="Gene3D" id="3.20.20.70">
    <property type="entry name" value="Aldolase class I"/>
    <property type="match status" value="1"/>
</dbReference>
<dbReference type="HAMAP" id="MF_00443">
    <property type="entry name" value="ThiG"/>
    <property type="match status" value="1"/>
</dbReference>
<dbReference type="InterPro" id="IPR013785">
    <property type="entry name" value="Aldolase_TIM"/>
</dbReference>
<dbReference type="InterPro" id="IPR033983">
    <property type="entry name" value="Thiazole_synthase_ThiG"/>
</dbReference>
<dbReference type="InterPro" id="IPR008867">
    <property type="entry name" value="ThiG"/>
</dbReference>
<dbReference type="PANTHER" id="PTHR34266">
    <property type="entry name" value="THIAZOLE SYNTHASE"/>
    <property type="match status" value="1"/>
</dbReference>
<dbReference type="PANTHER" id="PTHR34266:SF2">
    <property type="entry name" value="THIAZOLE SYNTHASE"/>
    <property type="match status" value="1"/>
</dbReference>
<dbReference type="Pfam" id="PF05690">
    <property type="entry name" value="ThiG"/>
    <property type="match status" value="1"/>
</dbReference>
<dbReference type="SUPFAM" id="SSF110399">
    <property type="entry name" value="ThiG-like"/>
    <property type="match status" value="1"/>
</dbReference>
<protein>
    <recommendedName>
        <fullName evidence="1">Thiazole synthase</fullName>
        <ecNumber evidence="1">2.8.1.10</ecNumber>
    </recommendedName>
</protein>
<gene>
    <name evidence="1" type="primary">thiG</name>
    <name type="ordered locus">E2348C_4297</name>
</gene>
<feature type="chain" id="PRO_1000196857" description="Thiazole synthase">
    <location>
        <begin position="1"/>
        <end position="256"/>
    </location>
</feature>
<feature type="active site" description="Schiff-base intermediate with DXP" evidence="1">
    <location>
        <position position="95"/>
    </location>
</feature>
<feature type="binding site" evidence="1">
    <location>
        <position position="156"/>
    </location>
    <ligand>
        <name>1-deoxy-D-xylulose 5-phosphate</name>
        <dbReference type="ChEBI" id="CHEBI:57792"/>
    </ligand>
</feature>
<feature type="binding site" evidence="1">
    <location>
        <begin position="182"/>
        <end position="183"/>
    </location>
    <ligand>
        <name>1-deoxy-D-xylulose 5-phosphate</name>
        <dbReference type="ChEBI" id="CHEBI:57792"/>
    </ligand>
</feature>
<feature type="binding site" evidence="1">
    <location>
        <begin position="204"/>
        <end position="205"/>
    </location>
    <ligand>
        <name>1-deoxy-D-xylulose 5-phosphate</name>
        <dbReference type="ChEBI" id="CHEBI:57792"/>
    </ligand>
</feature>
<sequence length="256" mass="26867">MLHIADKTFDSHLFTGTGKFASSQLMVESIRASGSQLVTLAMKRVDLRQHNDAILEPLIAAGVTLLPNTSGAKTAEEAIFAAHLAREALGTNWLKLEIHPDARWLLPDPIETLKAAETLVQQGFVVLPYCGADPVLCKRLEEVGCAAVMPLGAPIGSNQGLETRAMLEIIIQQATVPVVVDAGIGVPSHAAQALEMGADAVLVNTAIAVADDPVNMAKAFRLAVEAGLLARQSGPGSRSHFAHATSPLTGFLEASA</sequence>
<evidence type="ECO:0000255" key="1">
    <source>
        <dbReference type="HAMAP-Rule" id="MF_00443"/>
    </source>
</evidence>
<name>THIG_ECO27</name>